<evidence type="ECO:0000305" key="1"/>
<accession>Q29HZ1</accession>
<reference key="1">
    <citation type="journal article" date="2005" name="Genome Res.">
        <title>Comparative genome sequencing of Drosophila pseudoobscura: chromosomal, gene, and cis-element evolution.</title>
        <authorList>
            <person name="Richards S."/>
            <person name="Liu Y."/>
            <person name="Bettencourt B.R."/>
            <person name="Hradecky P."/>
            <person name="Letovsky S."/>
            <person name="Nielsen R."/>
            <person name="Thornton K."/>
            <person name="Hubisz M.J."/>
            <person name="Chen R."/>
            <person name="Meisel R.P."/>
            <person name="Couronne O."/>
            <person name="Hua S."/>
            <person name="Smith M.A."/>
            <person name="Zhang P."/>
            <person name="Liu J."/>
            <person name="Bussemaker H.J."/>
            <person name="van Batenburg M.F."/>
            <person name="Howells S.L."/>
            <person name="Scherer S.E."/>
            <person name="Sodergren E."/>
            <person name="Matthews B.B."/>
            <person name="Crosby M.A."/>
            <person name="Schroeder A.J."/>
            <person name="Ortiz-Barrientos D."/>
            <person name="Rives C.M."/>
            <person name="Metzker M.L."/>
            <person name="Muzny D.M."/>
            <person name="Scott G."/>
            <person name="Steffen D."/>
            <person name="Wheeler D.A."/>
            <person name="Worley K.C."/>
            <person name="Havlak P."/>
            <person name="Durbin K.J."/>
            <person name="Egan A."/>
            <person name="Gill R."/>
            <person name="Hume J."/>
            <person name="Morgan M.B."/>
            <person name="Miner G."/>
            <person name="Hamilton C."/>
            <person name="Huang Y."/>
            <person name="Waldron L."/>
            <person name="Verduzco D."/>
            <person name="Clerc-Blankenburg K.P."/>
            <person name="Dubchak I."/>
            <person name="Noor M.A.F."/>
            <person name="Anderson W."/>
            <person name="White K.P."/>
            <person name="Clark A.G."/>
            <person name="Schaeffer S.W."/>
            <person name="Gelbart W.M."/>
            <person name="Weinstock G.M."/>
            <person name="Gibbs R.A."/>
        </authorList>
    </citation>
    <scope>NUCLEOTIDE SEQUENCE [LARGE SCALE GENOMIC DNA]</scope>
    <source>
        <strain>MV2-25 / Tucson 14011-0121.94</strain>
    </source>
</reference>
<proteinExistence type="inferred from homology"/>
<feature type="chain" id="PRO_0000285254" description="LanC-like protein 3 homolog">
    <location>
        <begin position="1"/>
        <end position="420"/>
    </location>
</feature>
<comment type="similarity">
    <text evidence="1">Belongs to the LanC-like protein family.</text>
</comment>
<organism>
    <name type="scientific">Drosophila pseudoobscura pseudoobscura</name>
    <name type="common">Fruit fly</name>
    <dbReference type="NCBI Taxonomy" id="46245"/>
    <lineage>
        <taxon>Eukaryota</taxon>
        <taxon>Metazoa</taxon>
        <taxon>Ecdysozoa</taxon>
        <taxon>Arthropoda</taxon>
        <taxon>Hexapoda</taxon>
        <taxon>Insecta</taxon>
        <taxon>Pterygota</taxon>
        <taxon>Neoptera</taxon>
        <taxon>Endopterygota</taxon>
        <taxon>Diptera</taxon>
        <taxon>Brachycera</taxon>
        <taxon>Muscomorpha</taxon>
        <taxon>Ephydroidea</taxon>
        <taxon>Drosophilidae</taxon>
        <taxon>Drosophila</taxon>
        <taxon>Sophophora</taxon>
    </lineage>
</organism>
<keyword id="KW-1185">Reference proteome</keyword>
<gene>
    <name type="ORF">GA15215</name>
</gene>
<sequence>MERRYLKNPFQDFIGGENTAFASDEEHIKNLICTYVDTILEHCHPNSDDEDDRGDLYVGNAGIAFMFWKLASCEQTRDLYPPALQHASAFIRNAKANAERFKKRSAERYSFLCGNAGIYAVSAAISQAVKDTEELSNDLANFKSGIPSSKEFIHTKNGCDEVLVGRAGYLSGCYWLNDVLPDKKITDDDLISICQLIVTSGREYSKMNNSPLPLMFQYHGTEYLGAAHGLCAILHMLLDSPWFRTVPISAPAAELREIKRSIDYFLVLQDAEGNFPVALEDLRSGRDKRLVHWCHGAPGAVYMLAKAYLIFKEEKYLTSLRRSADLVWKKGFLRKGPGICHGVAGNGYVFLLLFRLTNEMKYLYRAHKFMELLTNSEFKQRARIPDNPHSLYEGVAGTVCFLVDILEPEQAYFPFMDVFH</sequence>
<dbReference type="EMBL" id="CH379064">
    <property type="protein sequence ID" value="EAL31616.1"/>
    <property type="molecule type" value="Genomic_DNA"/>
</dbReference>
<dbReference type="SMR" id="Q29HZ1"/>
<dbReference type="FunCoup" id="Q29HZ1">
    <property type="interactions" value="215"/>
</dbReference>
<dbReference type="EnsemblMetazoa" id="FBtr0287199">
    <property type="protein sequence ID" value="FBpp0285637"/>
    <property type="gene ID" value="FBgn0075239"/>
</dbReference>
<dbReference type="EnsemblMetazoa" id="FBtr0371540">
    <property type="protein sequence ID" value="FBpp0333708"/>
    <property type="gene ID" value="FBgn0075239"/>
</dbReference>
<dbReference type="KEGG" id="dpo:4814476"/>
<dbReference type="eggNOG" id="KOG2787">
    <property type="taxonomic scope" value="Eukaryota"/>
</dbReference>
<dbReference type="HOGENOM" id="CLU_036244_0_1_1"/>
<dbReference type="InParanoid" id="Q29HZ1"/>
<dbReference type="OMA" id="GTSAIMH"/>
<dbReference type="PhylomeDB" id="Q29HZ1"/>
<dbReference type="Proteomes" id="UP000001819">
    <property type="component" value="Chromosome X"/>
</dbReference>
<dbReference type="Bgee" id="FBgn0075239">
    <property type="expression patterns" value="Expressed in male reproductive system and 3 other cell types or tissues"/>
</dbReference>
<dbReference type="ExpressionAtlas" id="Q29HZ1">
    <property type="expression patterns" value="baseline"/>
</dbReference>
<dbReference type="GO" id="GO:0005886">
    <property type="term" value="C:plasma membrane"/>
    <property type="evidence" value="ECO:0007669"/>
    <property type="project" value="TreeGrafter"/>
</dbReference>
<dbReference type="GO" id="GO:0005975">
    <property type="term" value="P:carbohydrate metabolic process"/>
    <property type="evidence" value="ECO:0007669"/>
    <property type="project" value="InterPro"/>
</dbReference>
<dbReference type="GO" id="GO:0031179">
    <property type="term" value="P:peptide modification"/>
    <property type="evidence" value="ECO:0007669"/>
    <property type="project" value="InterPro"/>
</dbReference>
<dbReference type="CDD" id="cd04794">
    <property type="entry name" value="euk_LANCL"/>
    <property type="match status" value="1"/>
</dbReference>
<dbReference type="FunFam" id="1.50.10.10:FF:000012">
    <property type="entry name" value="LanC-like protein 3"/>
    <property type="match status" value="1"/>
</dbReference>
<dbReference type="Gene3D" id="1.50.10.10">
    <property type="match status" value="1"/>
</dbReference>
<dbReference type="InterPro" id="IPR012341">
    <property type="entry name" value="6hp_glycosidase-like_sf"/>
</dbReference>
<dbReference type="InterPro" id="IPR007822">
    <property type="entry name" value="LANC-like"/>
</dbReference>
<dbReference type="InterPro" id="IPR020464">
    <property type="entry name" value="LanC-like_prot_euk"/>
</dbReference>
<dbReference type="PANTHER" id="PTHR12736">
    <property type="entry name" value="LANC-LIKE PROTEIN"/>
    <property type="match status" value="1"/>
</dbReference>
<dbReference type="PANTHER" id="PTHR12736:SF7">
    <property type="entry name" value="LANC-LIKE PROTEIN 3"/>
    <property type="match status" value="1"/>
</dbReference>
<dbReference type="Pfam" id="PF05147">
    <property type="entry name" value="LANC_like"/>
    <property type="match status" value="1"/>
</dbReference>
<dbReference type="PRINTS" id="PR01951">
    <property type="entry name" value="LANCEUKARYTE"/>
</dbReference>
<dbReference type="PRINTS" id="PR01950">
    <property type="entry name" value="LANCSUPER"/>
</dbReference>
<dbReference type="SMART" id="SM01260">
    <property type="entry name" value="LANC_like"/>
    <property type="match status" value="1"/>
</dbReference>
<dbReference type="SUPFAM" id="SSF158745">
    <property type="entry name" value="LanC-like"/>
    <property type="match status" value="1"/>
</dbReference>
<name>LANC3_DROPS</name>
<protein>
    <recommendedName>
        <fullName>LanC-like protein 3 homolog</fullName>
    </recommendedName>
</protein>